<protein>
    <recommendedName>
        <fullName evidence="1">3-dehydroquinate synthase</fullName>
        <shortName evidence="1">DHQS</shortName>
        <ecNumber evidence="1">4.2.3.4</ecNumber>
    </recommendedName>
</protein>
<reference key="1">
    <citation type="journal article" date="2013" name="Plant Physiol.">
        <title>A Nostoc punctiforme Sugar Transporter Necessary to Establish a Cyanobacterium-Plant Symbiosis.</title>
        <authorList>
            <person name="Ekman M."/>
            <person name="Picossi S."/>
            <person name="Campbell E.L."/>
            <person name="Meeks J.C."/>
            <person name="Flores E."/>
        </authorList>
    </citation>
    <scope>NUCLEOTIDE SEQUENCE [LARGE SCALE GENOMIC DNA]</scope>
    <source>
        <strain>ATCC 29133 / PCC 73102</strain>
    </source>
</reference>
<keyword id="KW-0028">Amino-acid biosynthesis</keyword>
<keyword id="KW-0057">Aromatic amino acid biosynthesis</keyword>
<keyword id="KW-0170">Cobalt</keyword>
<keyword id="KW-0963">Cytoplasm</keyword>
<keyword id="KW-0456">Lyase</keyword>
<keyword id="KW-0479">Metal-binding</keyword>
<keyword id="KW-0520">NAD</keyword>
<keyword id="KW-0547">Nucleotide-binding</keyword>
<keyword id="KW-1185">Reference proteome</keyword>
<keyword id="KW-0862">Zinc</keyword>
<accession>B2J913</accession>
<evidence type="ECO:0000255" key="1">
    <source>
        <dbReference type="HAMAP-Rule" id="MF_00110"/>
    </source>
</evidence>
<proteinExistence type="inferred from homology"/>
<feature type="chain" id="PRO_1000094556" description="3-dehydroquinate synthase">
    <location>
        <begin position="1"/>
        <end position="363"/>
    </location>
</feature>
<feature type="binding site" evidence="1">
    <location>
        <begin position="107"/>
        <end position="111"/>
    </location>
    <ligand>
        <name>NAD(+)</name>
        <dbReference type="ChEBI" id="CHEBI:57540"/>
    </ligand>
</feature>
<feature type="binding site" evidence="1">
    <location>
        <begin position="131"/>
        <end position="132"/>
    </location>
    <ligand>
        <name>NAD(+)</name>
        <dbReference type="ChEBI" id="CHEBI:57540"/>
    </ligand>
</feature>
<feature type="binding site" evidence="1">
    <location>
        <position position="144"/>
    </location>
    <ligand>
        <name>NAD(+)</name>
        <dbReference type="ChEBI" id="CHEBI:57540"/>
    </ligand>
</feature>
<feature type="binding site" evidence="1">
    <location>
        <position position="153"/>
    </location>
    <ligand>
        <name>NAD(+)</name>
        <dbReference type="ChEBI" id="CHEBI:57540"/>
    </ligand>
</feature>
<feature type="binding site" evidence="1">
    <location>
        <position position="186"/>
    </location>
    <ligand>
        <name>Zn(2+)</name>
        <dbReference type="ChEBI" id="CHEBI:29105"/>
    </ligand>
</feature>
<feature type="binding site" evidence="1">
    <location>
        <position position="251"/>
    </location>
    <ligand>
        <name>Zn(2+)</name>
        <dbReference type="ChEBI" id="CHEBI:29105"/>
    </ligand>
</feature>
<feature type="binding site" evidence="1">
    <location>
        <position position="268"/>
    </location>
    <ligand>
        <name>Zn(2+)</name>
        <dbReference type="ChEBI" id="CHEBI:29105"/>
    </ligand>
</feature>
<comment type="function">
    <text evidence="1">Catalyzes the conversion of 3-deoxy-D-arabino-heptulosonate 7-phosphate (DAHP) to dehydroquinate (DHQ).</text>
</comment>
<comment type="catalytic activity">
    <reaction evidence="1">
        <text>7-phospho-2-dehydro-3-deoxy-D-arabino-heptonate = 3-dehydroquinate + phosphate</text>
        <dbReference type="Rhea" id="RHEA:21968"/>
        <dbReference type="ChEBI" id="CHEBI:32364"/>
        <dbReference type="ChEBI" id="CHEBI:43474"/>
        <dbReference type="ChEBI" id="CHEBI:58394"/>
        <dbReference type="EC" id="4.2.3.4"/>
    </reaction>
</comment>
<comment type="cofactor">
    <cofactor evidence="1">
        <name>Co(2+)</name>
        <dbReference type="ChEBI" id="CHEBI:48828"/>
    </cofactor>
    <cofactor evidence="1">
        <name>Zn(2+)</name>
        <dbReference type="ChEBI" id="CHEBI:29105"/>
    </cofactor>
    <text evidence="1">Binds 1 divalent metal cation per subunit. Can use either Co(2+) or Zn(2+).</text>
</comment>
<comment type="cofactor">
    <cofactor evidence="1">
        <name>NAD(+)</name>
        <dbReference type="ChEBI" id="CHEBI:57540"/>
    </cofactor>
</comment>
<comment type="pathway">
    <text evidence="1">Metabolic intermediate biosynthesis; chorismate biosynthesis; chorismate from D-erythrose 4-phosphate and phosphoenolpyruvate: step 2/7.</text>
</comment>
<comment type="subcellular location">
    <subcellularLocation>
        <location evidence="1">Cytoplasm</location>
    </subcellularLocation>
</comment>
<comment type="similarity">
    <text evidence="1">Belongs to the sugar phosphate cyclases superfamily. Dehydroquinate synthase family.</text>
</comment>
<gene>
    <name evidence="1" type="primary">aroB</name>
    <name type="ordered locus">Npun_R5729</name>
</gene>
<sequence>MTSLINVNLPEQSYEIAIAPSNLDQLGQQMANLKLGKKVLLVSNPTIFKHYGERAITSLKSAGFEVASCTLPPGERYKNLNSIQKLYDVALENRLERSATMVALGGGVIGDMTGFAAATWLRGINVVQVPTTLLAMVDSAIGGKTGVNHPHGKNLIGAFHQPRLVLIDPDVLKTLPMREFRAGMAEVIKYGVIWDAELFAQLEASKRLDQLRYVKPELIDSILTRSCQAKADVVGKDEKEGGLRAILNYGHTIGHAVESLTGYRLVNHGEAVAIGMVAAGQIAVELGMWQKEDTERQNALIQKTGLPTQLPSGVDIEAIIDALQLDKKVKAGKVRFVLPTEIGVVTVTDEVPSDIIRQVLQGM</sequence>
<dbReference type="EC" id="4.2.3.4" evidence="1"/>
<dbReference type="EMBL" id="CP001037">
    <property type="protein sequence ID" value="ACC84029.1"/>
    <property type="molecule type" value="Genomic_DNA"/>
</dbReference>
<dbReference type="RefSeq" id="WP_012411972.1">
    <property type="nucleotide sequence ID" value="NC_010628.1"/>
</dbReference>
<dbReference type="SMR" id="B2J913"/>
<dbReference type="STRING" id="63737.Npun_R5729"/>
<dbReference type="EnsemblBacteria" id="ACC84029">
    <property type="protein sequence ID" value="ACC84029"/>
    <property type="gene ID" value="Npun_R5729"/>
</dbReference>
<dbReference type="KEGG" id="npu:Npun_R5729"/>
<dbReference type="eggNOG" id="COG0337">
    <property type="taxonomic scope" value="Bacteria"/>
</dbReference>
<dbReference type="HOGENOM" id="CLU_001201_0_2_3"/>
<dbReference type="OrthoDB" id="9806583at2"/>
<dbReference type="PhylomeDB" id="B2J913"/>
<dbReference type="UniPathway" id="UPA00053">
    <property type="reaction ID" value="UER00085"/>
</dbReference>
<dbReference type="Proteomes" id="UP000001191">
    <property type="component" value="Chromosome"/>
</dbReference>
<dbReference type="GO" id="GO:0005737">
    <property type="term" value="C:cytoplasm"/>
    <property type="evidence" value="ECO:0007669"/>
    <property type="project" value="UniProtKB-SubCell"/>
</dbReference>
<dbReference type="GO" id="GO:0003856">
    <property type="term" value="F:3-dehydroquinate synthase activity"/>
    <property type="evidence" value="ECO:0007669"/>
    <property type="project" value="UniProtKB-UniRule"/>
</dbReference>
<dbReference type="GO" id="GO:0046872">
    <property type="term" value="F:metal ion binding"/>
    <property type="evidence" value="ECO:0007669"/>
    <property type="project" value="UniProtKB-KW"/>
</dbReference>
<dbReference type="GO" id="GO:0000166">
    <property type="term" value="F:nucleotide binding"/>
    <property type="evidence" value="ECO:0007669"/>
    <property type="project" value="UniProtKB-KW"/>
</dbReference>
<dbReference type="GO" id="GO:0008652">
    <property type="term" value="P:amino acid biosynthetic process"/>
    <property type="evidence" value="ECO:0007669"/>
    <property type="project" value="UniProtKB-KW"/>
</dbReference>
<dbReference type="GO" id="GO:0009073">
    <property type="term" value="P:aromatic amino acid family biosynthetic process"/>
    <property type="evidence" value="ECO:0007669"/>
    <property type="project" value="UniProtKB-KW"/>
</dbReference>
<dbReference type="GO" id="GO:0009423">
    <property type="term" value="P:chorismate biosynthetic process"/>
    <property type="evidence" value="ECO:0007669"/>
    <property type="project" value="UniProtKB-UniRule"/>
</dbReference>
<dbReference type="CDD" id="cd08195">
    <property type="entry name" value="DHQS"/>
    <property type="match status" value="1"/>
</dbReference>
<dbReference type="FunFam" id="3.40.50.1970:FF:000001">
    <property type="entry name" value="3-dehydroquinate synthase"/>
    <property type="match status" value="1"/>
</dbReference>
<dbReference type="Gene3D" id="3.40.50.1970">
    <property type="match status" value="1"/>
</dbReference>
<dbReference type="Gene3D" id="1.20.1090.10">
    <property type="entry name" value="Dehydroquinate synthase-like - alpha domain"/>
    <property type="match status" value="1"/>
</dbReference>
<dbReference type="HAMAP" id="MF_00110">
    <property type="entry name" value="DHQ_synthase"/>
    <property type="match status" value="1"/>
</dbReference>
<dbReference type="InterPro" id="IPR050071">
    <property type="entry name" value="Dehydroquinate_synthase"/>
</dbReference>
<dbReference type="InterPro" id="IPR016037">
    <property type="entry name" value="DHQ_synth_AroB"/>
</dbReference>
<dbReference type="InterPro" id="IPR030963">
    <property type="entry name" value="DHQ_synth_fam"/>
</dbReference>
<dbReference type="InterPro" id="IPR030960">
    <property type="entry name" value="DHQS/DOIS_N"/>
</dbReference>
<dbReference type="InterPro" id="IPR056179">
    <property type="entry name" value="DHQS_C"/>
</dbReference>
<dbReference type="NCBIfam" id="TIGR01357">
    <property type="entry name" value="aroB"/>
    <property type="match status" value="1"/>
</dbReference>
<dbReference type="PANTHER" id="PTHR43622">
    <property type="entry name" value="3-DEHYDROQUINATE SYNTHASE"/>
    <property type="match status" value="1"/>
</dbReference>
<dbReference type="PANTHER" id="PTHR43622:SF7">
    <property type="entry name" value="3-DEHYDROQUINATE SYNTHASE, CHLOROPLASTIC"/>
    <property type="match status" value="1"/>
</dbReference>
<dbReference type="Pfam" id="PF01761">
    <property type="entry name" value="DHQ_synthase"/>
    <property type="match status" value="1"/>
</dbReference>
<dbReference type="Pfam" id="PF24621">
    <property type="entry name" value="DHQS_C"/>
    <property type="match status" value="1"/>
</dbReference>
<dbReference type="PIRSF" id="PIRSF001455">
    <property type="entry name" value="DHQ_synth"/>
    <property type="match status" value="1"/>
</dbReference>
<dbReference type="SUPFAM" id="SSF56796">
    <property type="entry name" value="Dehydroquinate synthase-like"/>
    <property type="match status" value="1"/>
</dbReference>
<organism>
    <name type="scientific">Nostoc punctiforme (strain ATCC 29133 / PCC 73102)</name>
    <dbReference type="NCBI Taxonomy" id="63737"/>
    <lineage>
        <taxon>Bacteria</taxon>
        <taxon>Bacillati</taxon>
        <taxon>Cyanobacteriota</taxon>
        <taxon>Cyanophyceae</taxon>
        <taxon>Nostocales</taxon>
        <taxon>Nostocaceae</taxon>
        <taxon>Nostoc</taxon>
    </lineage>
</organism>
<name>AROB_NOSP7</name>